<organism>
    <name type="scientific">Saccharolobus islandicus (strain Y.G.57.14 / Yellowstone #1)</name>
    <name type="common">Sulfolobus islandicus</name>
    <dbReference type="NCBI Taxonomy" id="439386"/>
    <lineage>
        <taxon>Archaea</taxon>
        <taxon>Thermoproteota</taxon>
        <taxon>Thermoprotei</taxon>
        <taxon>Sulfolobales</taxon>
        <taxon>Sulfolobaceae</taxon>
        <taxon>Saccharolobus</taxon>
    </lineage>
</organism>
<accession>C3N7L2</accession>
<keyword id="KW-0238">DNA-binding</keyword>
<keyword id="KW-0804">Transcription</keyword>
<keyword id="KW-0805">Transcription regulation</keyword>
<comment type="function">
    <text evidence="1">Transcription factor that plays a role in the activation of archaeal genes transcribed by RNA polymerase. Facilitates transcription initiation by enhancing TATA-box recognition by TATA-box-binding protein (Tbp), and transcription factor B (Tfb) and RNA polymerase recruitment. Not absolutely required for transcription in vitro, but particularly important in cases where Tbp or Tfb function is not optimal. It dynamically alters the nucleic acid-binding properties of RNA polymerases by stabilizing the initiation complex and destabilizing elongation complexes. Seems to translocate with the RNA polymerase following initiation and acts by binding to the non template strand of the transcription bubble in elongation complexes.</text>
</comment>
<comment type="subunit">
    <text evidence="1">Monomer. Interaction with RNA polymerase subunits RpoF and RpoE is necessary for Tfe stimulatory transcription activity. Able to interact with Tbp and RNA polymerase in the absence of DNA promoter. Interacts both with the preinitiation and elongation complexes.</text>
</comment>
<comment type="domain">
    <text evidence="1">The winged helix domain is involved in binding to DNA in the preinitiation complex.</text>
</comment>
<comment type="similarity">
    <text evidence="1">Belongs to the TFE family.</text>
</comment>
<feature type="chain" id="PRO_1000216185" description="Transcription factor E">
    <location>
        <begin position="1"/>
        <end position="178"/>
    </location>
</feature>
<feature type="domain" description="HTH TFE/IIEalpha-type" evidence="1">
    <location>
        <begin position="4"/>
        <end position="88"/>
    </location>
</feature>
<name>TFE_SACI7</name>
<reference key="1">
    <citation type="journal article" date="2009" name="Proc. Natl. Acad. Sci. U.S.A.">
        <title>Biogeography of the Sulfolobus islandicus pan-genome.</title>
        <authorList>
            <person name="Reno M.L."/>
            <person name="Held N.L."/>
            <person name="Fields C.J."/>
            <person name="Burke P.V."/>
            <person name="Whitaker R.J."/>
        </authorList>
    </citation>
    <scope>NUCLEOTIDE SEQUENCE [LARGE SCALE GENOMIC DNA]</scope>
    <source>
        <strain>Y.G.57.14 / Yellowstone #1</strain>
    </source>
</reference>
<protein>
    <recommendedName>
        <fullName evidence="1">Transcription factor E</fullName>
        <shortName evidence="1">TFE</shortName>
    </recommendedName>
    <alternativeName>
        <fullName evidence="1">TFIIE subunit alpha homolog</fullName>
    </alternativeName>
    <alternativeName>
        <fullName evidence="1">Transcription initiation factor TFIIE</fullName>
    </alternativeName>
</protein>
<proteinExistence type="inferred from homology"/>
<gene>
    <name evidence="1" type="primary">tfe</name>
    <name type="ordered locus">YG5714_1950</name>
</gene>
<evidence type="ECO:0000255" key="1">
    <source>
        <dbReference type="HAMAP-Rule" id="MF_01909"/>
    </source>
</evidence>
<dbReference type="EMBL" id="CP001403">
    <property type="protein sequence ID" value="ACP46206.1"/>
    <property type="molecule type" value="Genomic_DNA"/>
</dbReference>
<dbReference type="RefSeq" id="WP_012711838.1">
    <property type="nucleotide sequence ID" value="NC_012622.1"/>
</dbReference>
<dbReference type="SMR" id="C3N7L2"/>
<dbReference type="GeneID" id="84062185"/>
<dbReference type="KEGG" id="siy:YG5714_1950"/>
<dbReference type="HOGENOM" id="CLU_100097_0_0_2"/>
<dbReference type="Proteomes" id="UP000002308">
    <property type="component" value="Chromosome"/>
</dbReference>
<dbReference type="GO" id="GO:0003677">
    <property type="term" value="F:DNA binding"/>
    <property type="evidence" value="ECO:0007669"/>
    <property type="project" value="UniProtKB-KW"/>
</dbReference>
<dbReference type="GO" id="GO:0006355">
    <property type="term" value="P:regulation of DNA-templated transcription"/>
    <property type="evidence" value="ECO:0007669"/>
    <property type="project" value="InterPro"/>
</dbReference>
<dbReference type="GO" id="GO:0006367">
    <property type="term" value="P:transcription initiation at RNA polymerase II promoter"/>
    <property type="evidence" value="ECO:0007669"/>
    <property type="project" value="InterPro"/>
</dbReference>
<dbReference type="Gene3D" id="1.10.10.10">
    <property type="entry name" value="Winged helix-like DNA-binding domain superfamily/Winged helix DNA-binding domain"/>
    <property type="match status" value="1"/>
</dbReference>
<dbReference type="HAMAP" id="MF_01909">
    <property type="entry name" value="TFE_arch"/>
    <property type="match status" value="1"/>
</dbReference>
<dbReference type="InterPro" id="IPR016481">
    <property type="entry name" value="TF_E_archaea"/>
</dbReference>
<dbReference type="InterPro" id="IPR039997">
    <property type="entry name" value="TFE"/>
</dbReference>
<dbReference type="InterPro" id="IPR017919">
    <property type="entry name" value="TFIIE/TFIIEa_HTH"/>
</dbReference>
<dbReference type="InterPro" id="IPR002853">
    <property type="entry name" value="TFIIE_asu"/>
</dbReference>
<dbReference type="InterPro" id="IPR024550">
    <property type="entry name" value="TFIIEa/SarR/Rpc3_HTH_dom"/>
</dbReference>
<dbReference type="InterPro" id="IPR036388">
    <property type="entry name" value="WH-like_DNA-bd_sf"/>
</dbReference>
<dbReference type="InterPro" id="IPR036390">
    <property type="entry name" value="WH_DNA-bd_sf"/>
</dbReference>
<dbReference type="PANTHER" id="PTHR13097:SF7">
    <property type="entry name" value="GENERAL TRANSCRIPTION FACTOR IIE SUBUNIT 1"/>
    <property type="match status" value="1"/>
</dbReference>
<dbReference type="PANTHER" id="PTHR13097">
    <property type="entry name" value="TRANSCRIPTION INITIATION FACTOR IIE, ALPHA SUBUNIT"/>
    <property type="match status" value="1"/>
</dbReference>
<dbReference type="Pfam" id="PF02002">
    <property type="entry name" value="TFIIE_alpha"/>
    <property type="match status" value="1"/>
</dbReference>
<dbReference type="PIRSF" id="PIRSF006373">
    <property type="entry name" value="TF_E_archaea"/>
    <property type="match status" value="1"/>
</dbReference>
<dbReference type="SMART" id="SM00531">
    <property type="entry name" value="TFIIE"/>
    <property type="match status" value="1"/>
</dbReference>
<dbReference type="SUPFAM" id="SSF46785">
    <property type="entry name" value="Winged helix' DNA-binding domain"/>
    <property type="match status" value="1"/>
</dbReference>
<dbReference type="PROSITE" id="PS51344">
    <property type="entry name" value="HTH_TFE_IIE"/>
    <property type="match status" value="1"/>
</dbReference>
<sequence>MVNAEDLFINLAKSLLGDDVIDVLRVLLEKGTEMTDEEIANQLNIKVNDVRKKLNLLEEQGFVSYRKTRDKDSGWFIYYWKPNIDQINEILLNRKRLILDKLKSRLEYEKNNTFFICPQDNSRYSFEEAFENEFKCLKCGSQLTYYDTEKIKSFLEQKIRQIEEEIDKETKLGANKSH</sequence>